<dbReference type="EC" id="1.2.4.4" evidence="1"/>
<dbReference type="EMBL" id="M33323">
    <property type="protein sequence ID" value="AAA30407.1"/>
    <property type="molecule type" value="mRNA"/>
</dbReference>
<dbReference type="EMBL" id="BC118380">
    <property type="protein sequence ID" value="AAI18381.1"/>
    <property type="molecule type" value="mRNA"/>
</dbReference>
<dbReference type="EMBL" id="M81742">
    <property type="protein sequence ID" value="AAA51410.1"/>
    <property type="molecule type" value="mRNA"/>
</dbReference>
<dbReference type="PIR" id="A34267">
    <property type="entry name" value="A34267"/>
</dbReference>
<dbReference type="RefSeq" id="NP_776932.1">
    <property type="nucleotide sequence ID" value="NM_174507.2"/>
</dbReference>
<dbReference type="SMR" id="P21839"/>
<dbReference type="FunCoup" id="P21839">
    <property type="interactions" value="1180"/>
</dbReference>
<dbReference type="STRING" id="9913.ENSBTAP00000016044"/>
<dbReference type="Ensembl" id="ENSBTAT00000016044.7">
    <property type="protein sequence ID" value="ENSBTAP00000016044.6"/>
    <property type="gene ID" value="ENSBTAG00000012096.7"/>
</dbReference>
<dbReference type="GeneID" id="282150"/>
<dbReference type="KEGG" id="bta:282150"/>
<dbReference type="CTD" id="594"/>
<dbReference type="VEuPathDB" id="HostDB:ENSBTAG00000012096"/>
<dbReference type="VGNC" id="VGNC:97245">
    <property type="gene designation" value="BCKDHB"/>
</dbReference>
<dbReference type="GeneTree" id="ENSGT00940000156533"/>
<dbReference type="InParanoid" id="P21839"/>
<dbReference type="OMA" id="SEAYYMA"/>
<dbReference type="OrthoDB" id="878at2759"/>
<dbReference type="Reactome" id="R-BTA-70895">
    <property type="pathway name" value="Branched-chain amino acid catabolism"/>
</dbReference>
<dbReference type="Reactome" id="R-BTA-9859138">
    <property type="pathway name" value="BCKDH synthesizes BCAA-CoA from KIC, KMVA, KIV"/>
</dbReference>
<dbReference type="SABIO-RK" id="P21839"/>
<dbReference type="Proteomes" id="UP000009136">
    <property type="component" value="Chromosome 9"/>
</dbReference>
<dbReference type="Bgee" id="ENSBTAG00000012096">
    <property type="expression patterns" value="Expressed in rumen papilla and 106 other cell types or tissues"/>
</dbReference>
<dbReference type="GO" id="GO:0160157">
    <property type="term" value="C:branched-chain alpha-ketoacid dehydrogenase complex"/>
    <property type="evidence" value="ECO:0000250"/>
    <property type="project" value="UniProtKB"/>
</dbReference>
<dbReference type="GO" id="GO:0005759">
    <property type="term" value="C:mitochondrial matrix"/>
    <property type="evidence" value="ECO:0007669"/>
    <property type="project" value="UniProtKB-SubCell"/>
</dbReference>
<dbReference type="GO" id="GO:0005739">
    <property type="term" value="C:mitochondrion"/>
    <property type="evidence" value="ECO:0000314"/>
    <property type="project" value="UniProtKB"/>
</dbReference>
<dbReference type="GO" id="GO:0003863">
    <property type="term" value="F:3-methyl-2-oxobutanoate dehydrogenase (2-methylpropanoyl-transferring) activity"/>
    <property type="evidence" value="ECO:0007669"/>
    <property type="project" value="UniProtKB-EC"/>
</dbReference>
<dbReference type="GO" id="GO:0046872">
    <property type="term" value="F:metal ion binding"/>
    <property type="evidence" value="ECO:0007669"/>
    <property type="project" value="UniProtKB-KW"/>
</dbReference>
<dbReference type="GO" id="GO:0009083">
    <property type="term" value="P:branched-chain amino acid catabolic process"/>
    <property type="evidence" value="ECO:0000250"/>
    <property type="project" value="UniProtKB"/>
</dbReference>
<dbReference type="GO" id="GO:0006629">
    <property type="term" value="P:lipid metabolic process"/>
    <property type="evidence" value="ECO:0007669"/>
    <property type="project" value="UniProtKB-KW"/>
</dbReference>
<dbReference type="GO" id="GO:0007584">
    <property type="term" value="P:response to nutrient"/>
    <property type="evidence" value="ECO:0000318"/>
    <property type="project" value="GO_Central"/>
</dbReference>
<dbReference type="CDD" id="cd07036">
    <property type="entry name" value="TPP_PYR_E1-PDHc-beta_like"/>
    <property type="match status" value="1"/>
</dbReference>
<dbReference type="FunFam" id="3.40.50.920:FF:000004">
    <property type="entry name" value="2-oxoisovalerate dehydrogenase subunit beta 1, mitochondrial"/>
    <property type="match status" value="1"/>
</dbReference>
<dbReference type="FunFam" id="3.40.50.970:FF:000001">
    <property type="entry name" value="Pyruvate dehydrogenase E1 beta subunit"/>
    <property type="match status" value="1"/>
</dbReference>
<dbReference type="Gene3D" id="3.40.50.920">
    <property type="match status" value="1"/>
</dbReference>
<dbReference type="Gene3D" id="3.40.50.970">
    <property type="match status" value="1"/>
</dbReference>
<dbReference type="InterPro" id="IPR029061">
    <property type="entry name" value="THDP-binding"/>
</dbReference>
<dbReference type="InterPro" id="IPR009014">
    <property type="entry name" value="Transketo_C/PFOR_II"/>
</dbReference>
<dbReference type="InterPro" id="IPR005475">
    <property type="entry name" value="Transketolase-like_Pyr-bd"/>
</dbReference>
<dbReference type="InterPro" id="IPR033248">
    <property type="entry name" value="Transketolase_C"/>
</dbReference>
<dbReference type="PANTHER" id="PTHR42980:SF1">
    <property type="entry name" value="2-OXOISOVALERATE DEHYDROGENASE SUBUNIT BETA, MITOCHONDRIAL"/>
    <property type="match status" value="1"/>
</dbReference>
<dbReference type="PANTHER" id="PTHR42980">
    <property type="entry name" value="2-OXOISOVALERATE DEHYDROGENASE SUBUNIT BETA-RELATED"/>
    <property type="match status" value="1"/>
</dbReference>
<dbReference type="Pfam" id="PF02779">
    <property type="entry name" value="Transket_pyr"/>
    <property type="match status" value="1"/>
</dbReference>
<dbReference type="Pfam" id="PF02780">
    <property type="entry name" value="Transketolase_C"/>
    <property type="match status" value="1"/>
</dbReference>
<dbReference type="SMART" id="SM00861">
    <property type="entry name" value="Transket_pyr"/>
    <property type="match status" value="1"/>
</dbReference>
<dbReference type="SUPFAM" id="SSF52518">
    <property type="entry name" value="Thiamin diphosphate-binding fold (THDP-binding)"/>
    <property type="match status" value="1"/>
</dbReference>
<dbReference type="SUPFAM" id="SSF52922">
    <property type="entry name" value="TK C-terminal domain-like"/>
    <property type="match status" value="1"/>
</dbReference>
<protein>
    <recommendedName>
        <fullName evidence="1">2-oxoisovalerate dehydrogenase subunit beta, mitochondrial</fullName>
        <ecNumber evidence="1">1.2.4.4</ecNumber>
    </recommendedName>
    <alternativeName>
        <fullName>Branched-chain alpha-keto acid dehydrogenase E1 component beta chain</fullName>
        <shortName>BCKDE1B</shortName>
        <shortName>BCKDH E1-beta</shortName>
    </alternativeName>
</protein>
<gene>
    <name type="primary">BCKDHB</name>
</gene>
<evidence type="ECO:0000250" key="1">
    <source>
        <dbReference type="UniProtKB" id="P21953"/>
    </source>
</evidence>
<evidence type="ECO:0000250" key="2">
    <source>
        <dbReference type="UniProtKB" id="Q6P3A8"/>
    </source>
</evidence>
<evidence type="ECO:0000269" key="3">
    <source>
    </source>
</evidence>
<evidence type="ECO:0000305" key="4"/>
<evidence type="ECO:0000305" key="5">
    <source>
    </source>
</evidence>
<name>ODBB_BOVIN</name>
<accession>P21839</accession>
<accession>Q148F4</accession>
<accession>Q28047</accession>
<reference key="1">
    <citation type="journal article" date="1990" name="Biochemistry">
        <title>Isolation and characterization of a complementary DNA clone coding for the E1 beta subunit of the bovine branched-chain alpha-ketoacid dehydrogenase complex: complete amino acid sequence of the precursor protein and its proteolytic processing.</title>
        <authorList>
            <person name="Nobukuni Y."/>
            <person name="Mitsubuchi H."/>
            <person name="Endo F."/>
            <person name="Asaka J."/>
            <person name="Oyama R."/>
            <person name="Titani K."/>
            <person name="Matsuda I."/>
        </authorList>
    </citation>
    <scope>NUCLEOTIDE SEQUENCE [MRNA]</scope>
    <scope>PARTIAL PROTEIN SEQUENCE</scope>
    <scope>SUBCELLULAR LOCATION</scope>
</reference>
<reference key="2">
    <citation type="submission" date="2006-06" db="EMBL/GenBank/DDBJ databases">
        <authorList>
            <consortium name="NIH - Mammalian Gene Collection (MGC) project"/>
        </authorList>
    </citation>
    <scope>NUCLEOTIDE SEQUENCE [LARGE SCALE MRNA]</scope>
    <source>
        <strain>Hereford</strain>
        <tissue>Fetal pons</tissue>
    </source>
</reference>
<reference key="3">
    <citation type="journal article" date="1992" name="J. Biol. Chem.">
        <title>Cloning and expression in Escherichia coli of mature E1 beta subunit of bovine mitochondrial branched-chain alpha-keto acid dehydrogenase complex. Mapping of the E1 beta-binding region on E2.</title>
        <authorList>
            <person name="Wynn R.M."/>
            <person name="Chuang J.L."/>
            <person name="Davie J.R."/>
            <person name="Fisher C.W."/>
            <person name="Hale M.A."/>
            <person name="Cox R.P."/>
            <person name="Chuang D.T."/>
        </authorList>
    </citation>
    <scope>NUCLEOTIDE SEQUENCE [MRNA] OF 24-392</scope>
    <scope>SUBUNIT</scope>
    <source>
        <tissue>Liver</tissue>
    </source>
</reference>
<feature type="transit peptide" description="Mitochondrion">
    <location>
        <begin position="1"/>
        <end position="50"/>
    </location>
</feature>
<feature type="chain" id="PRO_0000020469" description="2-oxoisovalerate dehydrogenase subunit beta, mitochondrial">
    <location>
        <begin position="51"/>
        <end position="392"/>
    </location>
</feature>
<feature type="binding site" evidence="1">
    <location>
        <position position="152"/>
    </location>
    <ligand>
        <name>thiamine diphosphate</name>
        <dbReference type="ChEBI" id="CHEBI:58937"/>
        <note>ligand shared with alpha subunit</note>
    </ligand>
</feature>
<feature type="binding site" evidence="1">
    <location>
        <position position="178"/>
    </location>
    <ligand>
        <name>K(+)</name>
        <dbReference type="ChEBI" id="CHEBI:29103"/>
        <note>structural</note>
    </ligand>
</feature>
<feature type="binding site" evidence="1">
    <location>
        <position position="180"/>
    </location>
    <ligand>
        <name>K(+)</name>
        <dbReference type="ChEBI" id="CHEBI:29103"/>
        <note>structural</note>
    </ligand>
</feature>
<feature type="binding site" evidence="1">
    <location>
        <position position="181"/>
    </location>
    <ligand>
        <name>K(+)</name>
        <dbReference type="ChEBI" id="CHEBI:29103"/>
        <note>structural</note>
    </ligand>
</feature>
<feature type="binding site" evidence="1">
    <location>
        <position position="228"/>
    </location>
    <ligand>
        <name>K(+)</name>
        <dbReference type="ChEBI" id="CHEBI:29103"/>
        <note>structural</note>
    </ligand>
</feature>
<feature type="binding site" evidence="1">
    <location>
        <position position="231"/>
    </location>
    <ligand>
        <name>K(+)</name>
        <dbReference type="ChEBI" id="CHEBI:29103"/>
        <note>structural</note>
    </ligand>
</feature>
<feature type="binding site" evidence="1">
    <location>
        <position position="233"/>
    </location>
    <ligand>
        <name>K(+)</name>
        <dbReference type="ChEBI" id="CHEBI:29103"/>
        <note>structural</note>
    </ligand>
</feature>
<feature type="modified residue" description="N6-acetyllysine" evidence="2">
    <location>
        <position position="232"/>
    </location>
</feature>
<feature type="modified residue" description="N6-acetyllysine" evidence="1">
    <location>
        <position position="241"/>
    </location>
</feature>
<feature type="sequence conflict" description="In Ref. 3." evidence="4" ref="3">
    <original>RRLCGAGLSRGFLQSASAYGAAA</original>
    <variation>GPGCVARACRGASCSPPRPTGLR</variation>
    <location>
        <begin position="24"/>
        <end position="46"/>
    </location>
</feature>
<feature type="sequence conflict" description="In Ref. 2; AAI18381." evidence="4" ref="2">
    <original>G</original>
    <variation>C</variation>
    <location>
        <position position="28"/>
    </location>
</feature>
<feature type="sequence conflict" description="In Ref. 3; AAA51410." evidence="4" ref="3">
    <original>V</original>
    <variation>E</variation>
    <location>
        <position position="283"/>
    </location>
</feature>
<feature type="sequence conflict" description="In Ref. 1; AAA30407." evidence="4" ref="1">
    <original>A</original>
    <variation>D</variation>
    <location>
        <position position="288"/>
    </location>
</feature>
<feature type="sequence conflict" description="In Ref. 3; AAA51410." evidence="4" ref="3">
    <original>E</original>
    <variation>Q</variation>
    <location>
        <position position="348"/>
    </location>
</feature>
<comment type="function">
    <text evidence="1">Together with BCKDHA forms the heterotetrameric E1 subunit of the mitochondrial branched-chain alpha-ketoacid dehydrogenase (BCKD) complex. The BCKD complex catalyzes the multi-step oxidative decarboxylation of alpha-ketoacids derived from the branched-chain amino-acids valine, leucine and isoleucine producing CO2 and acyl-CoA which is subsequently utilized to produce energy. The E1 subunit catalyzes the first step with the decarboxylation of the alpha-ketoacid forming an enzyme-product intermediate. A reductive acylation mediated by the lipoylamide cofactor of E2 extracts the acyl group from the E1 active site for the next step of the reaction.</text>
</comment>
<comment type="catalytic activity">
    <reaction evidence="1">
        <text>N(6)-[(R)-lipoyl]-L-lysyl-[protein] + 3-methyl-2-oxobutanoate + H(+) = N(6)-[(R)-S(8)-2-methylpropanoyldihydrolipoyl]-L-lysyl-[protein] + CO2</text>
        <dbReference type="Rhea" id="RHEA:13457"/>
        <dbReference type="Rhea" id="RHEA-COMP:10474"/>
        <dbReference type="Rhea" id="RHEA-COMP:10497"/>
        <dbReference type="ChEBI" id="CHEBI:11851"/>
        <dbReference type="ChEBI" id="CHEBI:15378"/>
        <dbReference type="ChEBI" id="CHEBI:16526"/>
        <dbReference type="ChEBI" id="CHEBI:83099"/>
        <dbReference type="ChEBI" id="CHEBI:83142"/>
        <dbReference type="EC" id="1.2.4.4"/>
    </reaction>
    <physiologicalReaction direction="left-to-right" evidence="1">
        <dbReference type="Rhea" id="RHEA:13458"/>
    </physiologicalReaction>
</comment>
<comment type="cofactor">
    <cofactor evidence="1">
        <name>thiamine diphosphate</name>
        <dbReference type="ChEBI" id="CHEBI:58937"/>
    </cofactor>
</comment>
<comment type="subunit">
    <text evidence="1 3">Heterotetramer of 2 alpha/BCKDHA and 2 beta chains/BCKDHB that forms the branched-chain alpha-keto acid decarboxylase (E1) component of the BCKD complex (PubMed:1730724). The branched-chain alpha-ketoacid dehydrogenase is a large complex composed of three major building blocks E1, E2 and E3. It is organized around E2, a 24-meric cubic core composed of DBT, to which are associated 6 to 12 copies of E1, and approximately 6 copies of the dehydrogenase E3, a DLD dimer (By similarity).</text>
</comment>
<comment type="subcellular location">
    <subcellularLocation>
        <location evidence="5">Mitochondrion matrix</location>
    </subcellularLocation>
</comment>
<organism>
    <name type="scientific">Bos taurus</name>
    <name type="common">Bovine</name>
    <dbReference type="NCBI Taxonomy" id="9913"/>
    <lineage>
        <taxon>Eukaryota</taxon>
        <taxon>Metazoa</taxon>
        <taxon>Chordata</taxon>
        <taxon>Craniata</taxon>
        <taxon>Vertebrata</taxon>
        <taxon>Euteleostomi</taxon>
        <taxon>Mammalia</taxon>
        <taxon>Eutheria</taxon>
        <taxon>Laurasiatheria</taxon>
        <taxon>Artiodactyla</taxon>
        <taxon>Ruminantia</taxon>
        <taxon>Pecora</taxon>
        <taxon>Bovidae</taxon>
        <taxon>Bovinae</taxon>
        <taxon>Bos</taxon>
    </lineage>
</organism>
<sequence length="392" mass="42935">MAAVAAFAGWLLRLRAAGADGPWRRLCGAGLSRGFLQSASAYGAAAQRRQVAHFTFQPDPEPVEYGQTQKMNLFQAVTSALDNSLAKDPTAVIFGEDVAFGGVFRCTVGLRDKYGKDRVFNTPLCEQGIVGFGIGIAVTGATAIAEIQFADYIFPAFDQIVNEAAKYRYRSGDLFNCGSLTIRSPWGCVGHGALYHSQSPEAFFAHCPGIKVVVPRSPFQAKGLLLSCIEDKNPCIFFEPKILYRAAVEQVPVEPYNIPLSQAEVIQEGSDVTLVAWGTQVHVIREVAAMAQEKLGVSCEVIDLRTILPWDVDTVCKSVIKTGRLLVSHEAPLTGGFASEISSTVQEECFLNLEAPISRVCGYDTPFPHIFEPFYIPDKWKCYDALRKMINY</sequence>
<keyword id="KW-0007">Acetylation</keyword>
<keyword id="KW-0903">Direct protein sequencing</keyword>
<keyword id="KW-0443">Lipid metabolism</keyword>
<keyword id="KW-0479">Metal-binding</keyword>
<keyword id="KW-0496">Mitochondrion</keyword>
<keyword id="KW-0560">Oxidoreductase</keyword>
<keyword id="KW-0630">Potassium</keyword>
<keyword id="KW-1185">Reference proteome</keyword>
<keyword id="KW-0809">Transit peptide</keyword>
<proteinExistence type="evidence at protein level"/>